<name>RS5_SHESM</name>
<reference key="1">
    <citation type="submission" date="2006-08" db="EMBL/GenBank/DDBJ databases">
        <title>Complete sequence of Shewanella sp. MR-4.</title>
        <authorList>
            <consortium name="US DOE Joint Genome Institute"/>
            <person name="Copeland A."/>
            <person name="Lucas S."/>
            <person name="Lapidus A."/>
            <person name="Barry K."/>
            <person name="Detter J.C."/>
            <person name="Glavina del Rio T."/>
            <person name="Hammon N."/>
            <person name="Israni S."/>
            <person name="Dalin E."/>
            <person name="Tice H."/>
            <person name="Pitluck S."/>
            <person name="Kiss H."/>
            <person name="Brettin T."/>
            <person name="Bruce D."/>
            <person name="Han C."/>
            <person name="Tapia R."/>
            <person name="Gilna P."/>
            <person name="Schmutz J."/>
            <person name="Larimer F."/>
            <person name="Land M."/>
            <person name="Hauser L."/>
            <person name="Kyrpides N."/>
            <person name="Mikhailova N."/>
            <person name="Nealson K."/>
            <person name="Konstantinidis K."/>
            <person name="Klappenbach J."/>
            <person name="Tiedje J."/>
            <person name="Richardson P."/>
        </authorList>
    </citation>
    <scope>NUCLEOTIDE SEQUENCE [LARGE SCALE GENOMIC DNA]</scope>
    <source>
        <strain>MR-4</strain>
    </source>
</reference>
<protein>
    <recommendedName>
        <fullName evidence="1">Small ribosomal subunit protein uS5</fullName>
    </recommendedName>
    <alternativeName>
        <fullName evidence="2">30S ribosomal protein S5</fullName>
    </alternativeName>
</protein>
<evidence type="ECO:0000255" key="1">
    <source>
        <dbReference type="HAMAP-Rule" id="MF_01307"/>
    </source>
</evidence>
<evidence type="ECO:0000305" key="2"/>
<gene>
    <name evidence="1" type="primary">rpsE</name>
    <name type="ordered locus">Shewmr4_0216</name>
</gene>
<organism>
    <name type="scientific">Shewanella sp. (strain MR-4)</name>
    <dbReference type="NCBI Taxonomy" id="60480"/>
    <lineage>
        <taxon>Bacteria</taxon>
        <taxon>Pseudomonadati</taxon>
        <taxon>Pseudomonadota</taxon>
        <taxon>Gammaproteobacteria</taxon>
        <taxon>Alteromonadales</taxon>
        <taxon>Shewanellaceae</taxon>
        <taxon>Shewanella</taxon>
    </lineage>
</organism>
<keyword id="KW-0687">Ribonucleoprotein</keyword>
<keyword id="KW-0689">Ribosomal protein</keyword>
<keyword id="KW-0694">RNA-binding</keyword>
<keyword id="KW-0699">rRNA-binding</keyword>
<accession>Q0HNS0</accession>
<proteinExistence type="inferred from homology"/>
<comment type="function">
    <text evidence="1">With S4 and S12 plays an important role in translational accuracy.</text>
</comment>
<comment type="function">
    <text evidence="1">Located at the back of the 30S subunit body where it stabilizes the conformation of the head with respect to the body.</text>
</comment>
<comment type="subunit">
    <text evidence="1">Part of the 30S ribosomal subunit. Contacts proteins S4 and S8.</text>
</comment>
<comment type="domain">
    <text>The N-terminal domain interacts with the head of the 30S subunit; the C-terminal domain interacts with the body and contacts protein S4. The interaction surface between S4 and S5 is involved in control of translational fidelity.</text>
</comment>
<comment type="similarity">
    <text evidence="1">Belongs to the universal ribosomal protein uS5 family.</text>
</comment>
<dbReference type="EMBL" id="CP000446">
    <property type="protein sequence ID" value="ABI37297.1"/>
    <property type="molecule type" value="Genomic_DNA"/>
</dbReference>
<dbReference type="RefSeq" id="WP_007644438.1">
    <property type="nucleotide sequence ID" value="NC_008321.1"/>
</dbReference>
<dbReference type="SMR" id="Q0HNS0"/>
<dbReference type="GeneID" id="94726203"/>
<dbReference type="KEGG" id="she:Shewmr4_0216"/>
<dbReference type="HOGENOM" id="CLU_065898_2_2_6"/>
<dbReference type="GO" id="GO:0015935">
    <property type="term" value="C:small ribosomal subunit"/>
    <property type="evidence" value="ECO:0007669"/>
    <property type="project" value="InterPro"/>
</dbReference>
<dbReference type="GO" id="GO:0019843">
    <property type="term" value="F:rRNA binding"/>
    <property type="evidence" value="ECO:0007669"/>
    <property type="project" value="UniProtKB-UniRule"/>
</dbReference>
<dbReference type="GO" id="GO:0003735">
    <property type="term" value="F:structural constituent of ribosome"/>
    <property type="evidence" value="ECO:0007669"/>
    <property type="project" value="InterPro"/>
</dbReference>
<dbReference type="GO" id="GO:0006412">
    <property type="term" value="P:translation"/>
    <property type="evidence" value="ECO:0007669"/>
    <property type="project" value="UniProtKB-UniRule"/>
</dbReference>
<dbReference type="FunFam" id="3.30.160.20:FF:000001">
    <property type="entry name" value="30S ribosomal protein S5"/>
    <property type="match status" value="1"/>
</dbReference>
<dbReference type="FunFam" id="3.30.230.10:FF:000002">
    <property type="entry name" value="30S ribosomal protein S5"/>
    <property type="match status" value="1"/>
</dbReference>
<dbReference type="Gene3D" id="3.30.160.20">
    <property type="match status" value="1"/>
</dbReference>
<dbReference type="Gene3D" id="3.30.230.10">
    <property type="match status" value="1"/>
</dbReference>
<dbReference type="HAMAP" id="MF_01307_B">
    <property type="entry name" value="Ribosomal_uS5_B"/>
    <property type="match status" value="1"/>
</dbReference>
<dbReference type="InterPro" id="IPR020568">
    <property type="entry name" value="Ribosomal_Su5_D2-typ_SF"/>
</dbReference>
<dbReference type="InterPro" id="IPR000851">
    <property type="entry name" value="Ribosomal_uS5"/>
</dbReference>
<dbReference type="InterPro" id="IPR005712">
    <property type="entry name" value="Ribosomal_uS5_bac-type"/>
</dbReference>
<dbReference type="InterPro" id="IPR005324">
    <property type="entry name" value="Ribosomal_uS5_C"/>
</dbReference>
<dbReference type="InterPro" id="IPR013810">
    <property type="entry name" value="Ribosomal_uS5_N"/>
</dbReference>
<dbReference type="InterPro" id="IPR018192">
    <property type="entry name" value="Ribosomal_uS5_N_CS"/>
</dbReference>
<dbReference type="InterPro" id="IPR014721">
    <property type="entry name" value="Ribsml_uS5_D2-typ_fold_subgr"/>
</dbReference>
<dbReference type="NCBIfam" id="TIGR01021">
    <property type="entry name" value="rpsE_bact"/>
    <property type="match status" value="1"/>
</dbReference>
<dbReference type="PANTHER" id="PTHR48277">
    <property type="entry name" value="MITOCHONDRIAL RIBOSOMAL PROTEIN S5"/>
    <property type="match status" value="1"/>
</dbReference>
<dbReference type="PANTHER" id="PTHR48277:SF1">
    <property type="entry name" value="MITOCHONDRIAL RIBOSOMAL PROTEIN S5"/>
    <property type="match status" value="1"/>
</dbReference>
<dbReference type="Pfam" id="PF00333">
    <property type="entry name" value="Ribosomal_S5"/>
    <property type="match status" value="1"/>
</dbReference>
<dbReference type="Pfam" id="PF03719">
    <property type="entry name" value="Ribosomal_S5_C"/>
    <property type="match status" value="1"/>
</dbReference>
<dbReference type="SUPFAM" id="SSF54768">
    <property type="entry name" value="dsRNA-binding domain-like"/>
    <property type="match status" value="1"/>
</dbReference>
<dbReference type="SUPFAM" id="SSF54211">
    <property type="entry name" value="Ribosomal protein S5 domain 2-like"/>
    <property type="match status" value="1"/>
</dbReference>
<dbReference type="PROSITE" id="PS00585">
    <property type="entry name" value="RIBOSOMAL_S5"/>
    <property type="match status" value="1"/>
</dbReference>
<dbReference type="PROSITE" id="PS50881">
    <property type="entry name" value="S5_DSRBD"/>
    <property type="match status" value="1"/>
</dbReference>
<sequence length="167" mass="17741">MAKLEAQQKDDLQEKLIAVNRVSKVVKGGRIFSFTALTVVGDGNGKVGYGYGKAREVPAAIQKAMEKARRNMVTVELNAGTLHHPVKGRHTGSRVYMQPASQGTGIIAGGAMRAVLEVAGVHNVLSKAYGSTNPINIVRATVDALVHMKSPSQIAAKRGLNVDEIRG</sequence>
<feature type="chain" id="PRO_0000323200" description="Small ribosomal subunit protein uS5">
    <location>
        <begin position="1"/>
        <end position="167"/>
    </location>
</feature>
<feature type="domain" description="S5 DRBM" evidence="1">
    <location>
        <begin position="12"/>
        <end position="75"/>
    </location>
</feature>